<evidence type="ECO:0000255" key="1"/>
<evidence type="ECO:0000305" key="2"/>
<sequence length="203" mass="22420">MTSAVGTSGTAITSRVHSLNRPNMVSVGTIVWLSSELMFFAGLFAFYFSARAQAGGNWPPPPTELNLYQAVPVTLVLIASSFTCQMGVFAAERGDIFGLRRWYVITFLMGLFFVLGQAYEYRNLMSHGTSIPSSAYGSVFYLATGFHGLHVTGGLIAFIFLLVRTGMSKFTPAQATASIVVSYYWHFVDIVWIALFTVIYFIR</sequence>
<accession>P63857</accession>
<accession>A0A1R3Y2L3</accession>
<accession>Q10385</accession>
<accession>X2BK43</accession>
<dbReference type="EC" id="7.1.1.9"/>
<dbReference type="EMBL" id="LT708304">
    <property type="protein sequence ID" value="SIU00824.1"/>
    <property type="molecule type" value="Genomic_DNA"/>
</dbReference>
<dbReference type="RefSeq" id="NP_855865.1">
    <property type="nucleotide sequence ID" value="NC_002945.3"/>
</dbReference>
<dbReference type="RefSeq" id="WP_003411389.1">
    <property type="nucleotide sequence ID" value="NC_002945.4"/>
</dbReference>
<dbReference type="SMR" id="P63857"/>
<dbReference type="KEGG" id="mbo:BQ2027_MB2216"/>
<dbReference type="PATRIC" id="fig|233413.5.peg.2432"/>
<dbReference type="Proteomes" id="UP000001419">
    <property type="component" value="Chromosome"/>
</dbReference>
<dbReference type="GO" id="GO:0005886">
    <property type="term" value="C:plasma membrane"/>
    <property type="evidence" value="ECO:0007669"/>
    <property type="project" value="UniProtKB-SubCell"/>
</dbReference>
<dbReference type="GO" id="GO:0004129">
    <property type="term" value="F:cytochrome-c oxidase activity"/>
    <property type="evidence" value="ECO:0007669"/>
    <property type="project" value="UniProtKB-EC"/>
</dbReference>
<dbReference type="GO" id="GO:0019646">
    <property type="term" value="P:aerobic electron transport chain"/>
    <property type="evidence" value="ECO:0007669"/>
    <property type="project" value="InterPro"/>
</dbReference>
<dbReference type="CDD" id="cd00386">
    <property type="entry name" value="Heme_Cu_Oxidase_III_like"/>
    <property type="match status" value="1"/>
</dbReference>
<dbReference type="FunFam" id="1.20.120.80:FF:000001">
    <property type="entry name" value="Cytochrome (Ubi)quinol oxidase subunit III"/>
    <property type="match status" value="1"/>
</dbReference>
<dbReference type="Gene3D" id="1.20.120.80">
    <property type="entry name" value="Cytochrome c oxidase, subunit III, four-helix bundle"/>
    <property type="match status" value="1"/>
</dbReference>
<dbReference type="InterPro" id="IPR024791">
    <property type="entry name" value="Cyt_c/ubiquinol_Oxase_su3"/>
</dbReference>
<dbReference type="InterPro" id="IPR000298">
    <property type="entry name" value="Cyt_c_oxidase-like_su3"/>
</dbReference>
<dbReference type="InterPro" id="IPR035973">
    <property type="entry name" value="Cyt_c_oxidase_su3-like_sf"/>
</dbReference>
<dbReference type="InterPro" id="IPR013833">
    <property type="entry name" value="Cyt_c_oxidase_su3_a-hlx"/>
</dbReference>
<dbReference type="PANTHER" id="PTHR11403:SF2">
    <property type="entry name" value="CYTOCHROME BO(3) UBIQUINOL OXIDASE SUBUNIT 3"/>
    <property type="match status" value="1"/>
</dbReference>
<dbReference type="PANTHER" id="PTHR11403">
    <property type="entry name" value="CYTOCHROME C OXIDASE SUBUNIT III"/>
    <property type="match status" value="1"/>
</dbReference>
<dbReference type="Pfam" id="PF00510">
    <property type="entry name" value="COX3"/>
    <property type="match status" value="1"/>
</dbReference>
<dbReference type="SUPFAM" id="SSF81452">
    <property type="entry name" value="Cytochrome c oxidase subunit III-like"/>
    <property type="match status" value="1"/>
</dbReference>
<dbReference type="PROSITE" id="PS50253">
    <property type="entry name" value="COX3"/>
    <property type="match status" value="1"/>
</dbReference>
<organism>
    <name type="scientific">Mycobacterium bovis (strain ATCC BAA-935 / AF2122/97)</name>
    <dbReference type="NCBI Taxonomy" id="233413"/>
    <lineage>
        <taxon>Bacteria</taxon>
        <taxon>Bacillati</taxon>
        <taxon>Actinomycetota</taxon>
        <taxon>Actinomycetes</taxon>
        <taxon>Mycobacteriales</taxon>
        <taxon>Mycobacteriaceae</taxon>
        <taxon>Mycobacterium</taxon>
        <taxon>Mycobacterium tuberculosis complex</taxon>
    </lineage>
</organism>
<name>COX3_MYCBO</name>
<feature type="chain" id="PRO_0000183881" description="Probable cytochrome c oxidase subunit 3">
    <location>
        <begin position="1"/>
        <end position="203"/>
    </location>
</feature>
<feature type="transmembrane region" description="Helical" evidence="1">
    <location>
        <begin position="30"/>
        <end position="50"/>
    </location>
</feature>
<feature type="transmembrane region" description="Helical" evidence="1">
    <location>
        <begin position="71"/>
        <end position="91"/>
    </location>
</feature>
<feature type="transmembrane region" description="Helical" evidence="1">
    <location>
        <begin position="96"/>
        <end position="116"/>
    </location>
</feature>
<feature type="transmembrane region" description="Helical" evidence="1">
    <location>
        <begin position="143"/>
        <end position="163"/>
    </location>
</feature>
<feature type="transmembrane region" description="Helical" evidence="1">
    <location>
        <begin position="179"/>
        <end position="199"/>
    </location>
</feature>
<gene>
    <name type="primary">ctaE</name>
    <name type="ordered locus">BQ2027_MB2216</name>
</gene>
<keyword id="KW-1003">Cell membrane</keyword>
<keyword id="KW-0472">Membrane</keyword>
<keyword id="KW-1185">Reference proteome</keyword>
<keyword id="KW-1278">Translocase</keyword>
<keyword id="KW-0812">Transmembrane</keyword>
<keyword id="KW-1133">Transmembrane helix</keyword>
<proteinExistence type="inferred from homology"/>
<protein>
    <recommendedName>
        <fullName>Probable cytochrome c oxidase subunit 3</fullName>
        <ecNumber>7.1.1.9</ecNumber>
    </recommendedName>
    <alternativeName>
        <fullName>Cytochrome aa3 subunit 3</fullName>
    </alternativeName>
    <alternativeName>
        <fullName>Cytochrome c oxidase polypeptide III</fullName>
    </alternativeName>
</protein>
<reference key="1">
    <citation type="journal article" date="2003" name="Proc. Natl. Acad. Sci. U.S.A.">
        <title>The complete genome sequence of Mycobacterium bovis.</title>
        <authorList>
            <person name="Garnier T."/>
            <person name="Eiglmeier K."/>
            <person name="Camus J.-C."/>
            <person name="Medina N."/>
            <person name="Mansoor H."/>
            <person name="Pryor M."/>
            <person name="Duthoy S."/>
            <person name="Grondin S."/>
            <person name="Lacroix C."/>
            <person name="Monsempe C."/>
            <person name="Simon S."/>
            <person name="Harris B."/>
            <person name="Atkin R."/>
            <person name="Doggett J."/>
            <person name="Mayes R."/>
            <person name="Keating L."/>
            <person name="Wheeler P.R."/>
            <person name="Parkhill J."/>
            <person name="Barrell B.G."/>
            <person name="Cole S.T."/>
            <person name="Gordon S.V."/>
            <person name="Hewinson R.G."/>
        </authorList>
    </citation>
    <scope>NUCLEOTIDE SEQUENCE [LARGE SCALE GENOMIC DNA]</scope>
    <source>
        <strain>ATCC BAA-935 / AF2122/97</strain>
    </source>
</reference>
<reference key="2">
    <citation type="journal article" date="2017" name="Genome Announc.">
        <title>Updated reference genome sequence and annotation of Mycobacterium bovis AF2122/97.</title>
        <authorList>
            <person name="Malone K.M."/>
            <person name="Farrell D."/>
            <person name="Stuber T.P."/>
            <person name="Schubert O.T."/>
            <person name="Aebersold R."/>
            <person name="Robbe-Austerman S."/>
            <person name="Gordon S.V."/>
        </authorList>
    </citation>
    <scope>NUCLEOTIDE SEQUENCE [LARGE SCALE GENOMIC DNA]</scope>
    <scope>GENOME REANNOTATION</scope>
    <source>
        <strain>ATCC BAA-935 / AF2122/97</strain>
    </source>
</reference>
<comment type="catalytic activity">
    <reaction>
        <text>4 Fe(II)-[cytochrome c] + O2 + 8 H(+)(in) = 4 Fe(III)-[cytochrome c] + 2 H2O + 4 H(+)(out)</text>
        <dbReference type="Rhea" id="RHEA:11436"/>
        <dbReference type="Rhea" id="RHEA-COMP:10350"/>
        <dbReference type="Rhea" id="RHEA-COMP:14399"/>
        <dbReference type="ChEBI" id="CHEBI:15377"/>
        <dbReference type="ChEBI" id="CHEBI:15378"/>
        <dbReference type="ChEBI" id="CHEBI:15379"/>
        <dbReference type="ChEBI" id="CHEBI:29033"/>
        <dbReference type="ChEBI" id="CHEBI:29034"/>
        <dbReference type="EC" id="7.1.1.9"/>
    </reaction>
</comment>
<comment type="subcellular location">
    <subcellularLocation>
        <location>Cell membrane</location>
        <topology>Multi-pass membrane protein</topology>
    </subcellularLocation>
</comment>
<comment type="similarity">
    <text evidence="2">Belongs to the cytochrome c oxidase subunit 3 family.</text>
</comment>